<sequence>MKVRPSVRKICENCRLIRRKRKILVICTNPKHKQRQG</sequence>
<protein>
    <recommendedName>
        <fullName evidence="1">Large ribosomal subunit protein bL36c</fullName>
    </recommendedName>
    <alternativeName>
        <fullName evidence="2">50S ribosomal protein L36, chloroplastic</fullName>
    </alternativeName>
</protein>
<dbReference type="EMBL" id="AY835431">
    <property type="protein sequence ID" value="AAV80612.1"/>
    <property type="molecule type" value="Genomic_DNA"/>
</dbReference>
<dbReference type="RefSeq" id="YP_636188.1">
    <property type="nucleotide sequence ID" value="NC_008114.1"/>
</dbReference>
<dbReference type="SMR" id="Q3ZJ79"/>
<dbReference type="GeneID" id="4108812"/>
<dbReference type="GO" id="GO:0009507">
    <property type="term" value="C:chloroplast"/>
    <property type="evidence" value="ECO:0007669"/>
    <property type="project" value="UniProtKB-SubCell"/>
</dbReference>
<dbReference type="GO" id="GO:1990904">
    <property type="term" value="C:ribonucleoprotein complex"/>
    <property type="evidence" value="ECO:0007669"/>
    <property type="project" value="UniProtKB-KW"/>
</dbReference>
<dbReference type="GO" id="GO:0005840">
    <property type="term" value="C:ribosome"/>
    <property type="evidence" value="ECO:0007669"/>
    <property type="project" value="UniProtKB-KW"/>
</dbReference>
<dbReference type="GO" id="GO:0003735">
    <property type="term" value="F:structural constituent of ribosome"/>
    <property type="evidence" value="ECO:0007669"/>
    <property type="project" value="InterPro"/>
</dbReference>
<dbReference type="GO" id="GO:0006412">
    <property type="term" value="P:translation"/>
    <property type="evidence" value="ECO:0007669"/>
    <property type="project" value="UniProtKB-UniRule"/>
</dbReference>
<dbReference type="HAMAP" id="MF_00251">
    <property type="entry name" value="Ribosomal_bL36"/>
    <property type="match status" value="1"/>
</dbReference>
<dbReference type="InterPro" id="IPR000473">
    <property type="entry name" value="Ribosomal_bL36"/>
</dbReference>
<dbReference type="InterPro" id="IPR035977">
    <property type="entry name" value="Ribosomal_bL36_sp"/>
</dbReference>
<dbReference type="NCBIfam" id="TIGR01022">
    <property type="entry name" value="rpmJ_bact"/>
    <property type="match status" value="1"/>
</dbReference>
<dbReference type="PANTHER" id="PTHR42888">
    <property type="entry name" value="50S RIBOSOMAL PROTEIN L36, CHLOROPLASTIC"/>
    <property type="match status" value="1"/>
</dbReference>
<dbReference type="PANTHER" id="PTHR42888:SF1">
    <property type="entry name" value="LARGE RIBOSOMAL SUBUNIT PROTEIN BL36C"/>
    <property type="match status" value="1"/>
</dbReference>
<dbReference type="Pfam" id="PF00444">
    <property type="entry name" value="Ribosomal_L36"/>
    <property type="match status" value="1"/>
</dbReference>
<dbReference type="SUPFAM" id="SSF57840">
    <property type="entry name" value="Ribosomal protein L36"/>
    <property type="match status" value="1"/>
</dbReference>
<dbReference type="PROSITE" id="PS00828">
    <property type="entry name" value="RIBOSOMAL_L36"/>
    <property type="match status" value="1"/>
</dbReference>
<feature type="chain" id="PRO_0000276832" description="Large ribosomal subunit protein bL36c">
    <location>
        <begin position="1"/>
        <end position="37"/>
    </location>
</feature>
<comment type="subcellular location">
    <subcellularLocation>
        <location>Plastid</location>
        <location>Chloroplast</location>
    </subcellularLocation>
</comment>
<comment type="similarity">
    <text evidence="1">Belongs to the bacterial ribosomal protein bL36 family.</text>
</comment>
<evidence type="ECO:0000255" key="1">
    <source>
        <dbReference type="HAMAP-Rule" id="MF_00251"/>
    </source>
</evidence>
<evidence type="ECO:0000305" key="2"/>
<proteinExistence type="inferred from homology"/>
<reference key="1">
    <citation type="journal article" date="2005" name="Mol. Biol. Evol.">
        <title>The chloroplast genome sequence of the green alga Pseudendoclonium akinetum (Ulvophyceae) reveals unusual structural features and new insights into the branching order of chlorophyte lineages.</title>
        <authorList>
            <person name="Pombert J.-F."/>
            <person name="Otis C."/>
            <person name="Lemieux C."/>
            <person name="Turmel M."/>
        </authorList>
    </citation>
    <scope>NUCLEOTIDE SEQUENCE [LARGE SCALE GENOMIC DNA]</scope>
    <source>
        <strain>UTEX 1912</strain>
    </source>
</reference>
<geneLocation type="chloroplast"/>
<keyword id="KW-0150">Chloroplast</keyword>
<keyword id="KW-0934">Plastid</keyword>
<keyword id="KW-0687">Ribonucleoprotein</keyword>
<keyword id="KW-0689">Ribosomal protein</keyword>
<gene>
    <name evidence="1" type="primary">rpl36</name>
</gene>
<organism>
    <name type="scientific">Tupiella akineta</name>
    <name type="common">Green alga</name>
    <name type="synonym">Pseudendoclonium akinetum</name>
    <dbReference type="NCBI Taxonomy" id="160070"/>
    <lineage>
        <taxon>Eukaryota</taxon>
        <taxon>Viridiplantae</taxon>
        <taxon>Chlorophyta</taxon>
        <taxon>Ulvophyceae</taxon>
        <taxon>OUU clade</taxon>
        <taxon>Ulotrichales</taxon>
        <taxon>Tupiellaceae</taxon>
        <taxon>Tupiella</taxon>
    </lineage>
</organism>
<name>RK36_TUPAK</name>
<accession>Q3ZJ79</accession>